<evidence type="ECO:0000255" key="1">
    <source>
        <dbReference type="HAMAP-Rule" id="MF_00531"/>
    </source>
</evidence>
<evidence type="ECO:0000305" key="2"/>
<organism>
    <name type="scientific">Streptococcus pneumoniae serotype 2 (strain D39 / NCTC 7466)</name>
    <dbReference type="NCBI Taxonomy" id="373153"/>
    <lineage>
        <taxon>Bacteria</taxon>
        <taxon>Bacillati</taxon>
        <taxon>Bacillota</taxon>
        <taxon>Bacilli</taxon>
        <taxon>Lactobacillales</taxon>
        <taxon>Streptococcaceae</taxon>
        <taxon>Streptococcus</taxon>
    </lineage>
</organism>
<name>RS19_STRP2</name>
<accession>Q04MN2</accession>
<proteinExistence type="inferred from homology"/>
<gene>
    <name evidence="1" type="primary">rpsS</name>
    <name type="ordered locus">SPD_0197</name>
</gene>
<keyword id="KW-1185">Reference proteome</keyword>
<keyword id="KW-0687">Ribonucleoprotein</keyword>
<keyword id="KW-0689">Ribosomal protein</keyword>
<keyword id="KW-0694">RNA-binding</keyword>
<keyword id="KW-0699">rRNA-binding</keyword>
<sequence length="93" mass="10750">MGRSLKKGPFVDEHLMKKVEAQANDEKKKVIKTWSRRSTIFPSFIGYTIAVYDGRKHVPVYIQEDMVGHKLGEFAPTRTYKGHAADDKKTRRK</sequence>
<comment type="function">
    <text evidence="1">Protein S19 forms a complex with S13 that binds strongly to the 16S ribosomal RNA.</text>
</comment>
<comment type="similarity">
    <text evidence="1">Belongs to the universal ribosomal protein uS19 family.</text>
</comment>
<reference key="1">
    <citation type="journal article" date="2007" name="J. Bacteriol.">
        <title>Genome sequence of Avery's virulent serotype 2 strain D39 of Streptococcus pneumoniae and comparison with that of unencapsulated laboratory strain R6.</title>
        <authorList>
            <person name="Lanie J.A."/>
            <person name="Ng W.-L."/>
            <person name="Kazmierczak K.M."/>
            <person name="Andrzejewski T.M."/>
            <person name="Davidsen T.M."/>
            <person name="Wayne K.J."/>
            <person name="Tettelin H."/>
            <person name="Glass J.I."/>
            <person name="Winkler M.E."/>
        </authorList>
    </citation>
    <scope>NUCLEOTIDE SEQUENCE [LARGE SCALE GENOMIC DNA]</scope>
    <source>
        <strain>D39 / NCTC 7466</strain>
    </source>
</reference>
<feature type="chain" id="PRO_1000051131" description="Small ribosomal subunit protein uS19">
    <location>
        <begin position="1"/>
        <end position="93"/>
    </location>
</feature>
<dbReference type="EMBL" id="CP000410">
    <property type="protein sequence ID" value="ABJ54408.1"/>
    <property type="molecule type" value="Genomic_DNA"/>
</dbReference>
<dbReference type="RefSeq" id="WP_000533766.1">
    <property type="nucleotide sequence ID" value="NZ_JAMLJR010000002.1"/>
</dbReference>
<dbReference type="SMR" id="Q04MN2"/>
<dbReference type="PaxDb" id="373153-SPD_0197"/>
<dbReference type="GeneID" id="93920908"/>
<dbReference type="KEGG" id="spd:SPD_0197"/>
<dbReference type="eggNOG" id="COG0185">
    <property type="taxonomic scope" value="Bacteria"/>
</dbReference>
<dbReference type="HOGENOM" id="CLU_144911_0_1_9"/>
<dbReference type="BioCyc" id="SPNE373153:G1G6V-220-MONOMER"/>
<dbReference type="Proteomes" id="UP000001452">
    <property type="component" value="Chromosome"/>
</dbReference>
<dbReference type="GO" id="GO:0005737">
    <property type="term" value="C:cytoplasm"/>
    <property type="evidence" value="ECO:0007669"/>
    <property type="project" value="UniProtKB-ARBA"/>
</dbReference>
<dbReference type="GO" id="GO:0015935">
    <property type="term" value="C:small ribosomal subunit"/>
    <property type="evidence" value="ECO:0007669"/>
    <property type="project" value="InterPro"/>
</dbReference>
<dbReference type="GO" id="GO:0019843">
    <property type="term" value="F:rRNA binding"/>
    <property type="evidence" value="ECO:0007669"/>
    <property type="project" value="UniProtKB-UniRule"/>
</dbReference>
<dbReference type="GO" id="GO:0003735">
    <property type="term" value="F:structural constituent of ribosome"/>
    <property type="evidence" value="ECO:0007669"/>
    <property type="project" value="InterPro"/>
</dbReference>
<dbReference type="GO" id="GO:0000028">
    <property type="term" value="P:ribosomal small subunit assembly"/>
    <property type="evidence" value="ECO:0007669"/>
    <property type="project" value="TreeGrafter"/>
</dbReference>
<dbReference type="GO" id="GO:0006412">
    <property type="term" value="P:translation"/>
    <property type="evidence" value="ECO:0007669"/>
    <property type="project" value="UniProtKB-UniRule"/>
</dbReference>
<dbReference type="FunFam" id="3.30.860.10:FF:000001">
    <property type="entry name" value="30S ribosomal protein S19"/>
    <property type="match status" value="1"/>
</dbReference>
<dbReference type="Gene3D" id="3.30.860.10">
    <property type="entry name" value="30s Ribosomal Protein S19, Chain A"/>
    <property type="match status" value="1"/>
</dbReference>
<dbReference type="HAMAP" id="MF_00531">
    <property type="entry name" value="Ribosomal_uS19"/>
    <property type="match status" value="1"/>
</dbReference>
<dbReference type="InterPro" id="IPR002222">
    <property type="entry name" value="Ribosomal_uS19"/>
</dbReference>
<dbReference type="InterPro" id="IPR005732">
    <property type="entry name" value="Ribosomal_uS19_bac-type"/>
</dbReference>
<dbReference type="InterPro" id="IPR020934">
    <property type="entry name" value="Ribosomal_uS19_CS"/>
</dbReference>
<dbReference type="InterPro" id="IPR023575">
    <property type="entry name" value="Ribosomal_uS19_SF"/>
</dbReference>
<dbReference type="NCBIfam" id="TIGR01050">
    <property type="entry name" value="rpsS_bact"/>
    <property type="match status" value="1"/>
</dbReference>
<dbReference type="PANTHER" id="PTHR11880">
    <property type="entry name" value="RIBOSOMAL PROTEIN S19P FAMILY MEMBER"/>
    <property type="match status" value="1"/>
</dbReference>
<dbReference type="PANTHER" id="PTHR11880:SF8">
    <property type="entry name" value="SMALL RIBOSOMAL SUBUNIT PROTEIN US19M"/>
    <property type="match status" value="1"/>
</dbReference>
<dbReference type="Pfam" id="PF00203">
    <property type="entry name" value="Ribosomal_S19"/>
    <property type="match status" value="1"/>
</dbReference>
<dbReference type="PIRSF" id="PIRSF002144">
    <property type="entry name" value="Ribosomal_S19"/>
    <property type="match status" value="1"/>
</dbReference>
<dbReference type="PRINTS" id="PR00975">
    <property type="entry name" value="RIBOSOMALS19"/>
</dbReference>
<dbReference type="SUPFAM" id="SSF54570">
    <property type="entry name" value="Ribosomal protein S19"/>
    <property type="match status" value="1"/>
</dbReference>
<dbReference type="PROSITE" id="PS00323">
    <property type="entry name" value="RIBOSOMAL_S19"/>
    <property type="match status" value="1"/>
</dbReference>
<protein>
    <recommendedName>
        <fullName evidence="1">Small ribosomal subunit protein uS19</fullName>
    </recommendedName>
    <alternativeName>
        <fullName evidence="2">30S ribosomal protein S19</fullName>
    </alternativeName>
</protein>